<organism>
    <name type="scientific">Gracilaria tenuistipitata var. liui</name>
    <name type="common">Red alga</name>
    <dbReference type="NCBI Taxonomy" id="285951"/>
    <lineage>
        <taxon>Eukaryota</taxon>
        <taxon>Rhodophyta</taxon>
        <taxon>Florideophyceae</taxon>
        <taxon>Rhodymeniophycidae</taxon>
        <taxon>Gracilariales</taxon>
        <taxon>Gracilariaceae</taxon>
        <taxon>Gracilaria</taxon>
        <taxon>Gracilaria tenuistipitata</taxon>
    </lineage>
</organism>
<accession>Q6B8T5</accession>
<dbReference type="EMBL" id="AY673996">
    <property type="protein sequence ID" value="AAT79700.1"/>
    <property type="molecule type" value="Genomic_DNA"/>
</dbReference>
<dbReference type="RefSeq" id="YP_063625.1">
    <property type="nucleotide sequence ID" value="NC_006137.1"/>
</dbReference>
<dbReference type="SMR" id="Q6B8T5"/>
<dbReference type="GeneID" id="2944007"/>
<dbReference type="GO" id="GO:0009507">
    <property type="term" value="C:chloroplast"/>
    <property type="evidence" value="ECO:0007669"/>
    <property type="project" value="UniProtKB-SubCell"/>
</dbReference>
<dbReference type="GO" id="GO:0015934">
    <property type="term" value="C:large ribosomal subunit"/>
    <property type="evidence" value="ECO:0007669"/>
    <property type="project" value="TreeGrafter"/>
</dbReference>
<dbReference type="GO" id="GO:0003735">
    <property type="term" value="F:structural constituent of ribosome"/>
    <property type="evidence" value="ECO:0007669"/>
    <property type="project" value="InterPro"/>
</dbReference>
<dbReference type="GO" id="GO:0006412">
    <property type="term" value="P:translation"/>
    <property type="evidence" value="ECO:0007669"/>
    <property type="project" value="UniProtKB-UniRule"/>
</dbReference>
<dbReference type="Gene3D" id="4.10.410.60">
    <property type="match status" value="1"/>
</dbReference>
<dbReference type="HAMAP" id="MF_00514">
    <property type="entry name" value="Ribosomal_bL35"/>
    <property type="match status" value="1"/>
</dbReference>
<dbReference type="InterPro" id="IPR001706">
    <property type="entry name" value="Ribosomal_bL35"/>
</dbReference>
<dbReference type="InterPro" id="IPR021137">
    <property type="entry name" value="Ribosomal_bL35-like"/>
</dbReference>
<dbReference type="InterPro" id="IPR037229">
    <property type="entry name" value="Ribosomal_bL35_sf"/>
</dbReference>
<dbReference type="NCBIfam" id="TIGR00001">
    <property type="entry name" value="rpmI_bact"/>
    <property type="match status" value="1"/>
</dbReference>
<dbReference type="PANTHER" id="PTHR33343">
    <property type="entry name" value="54S RIBOSOMAL PROTEIN BL35M"/>
    <property type="match status" value="1"/>
</dbReference>
<dbReference type="PANTHER" id="PTHR33343:SF1">
    <property type="entry name" value="LARGE RIBOSOMAL SUBUNIT PROTEIN BL35M"/>
    <property type="match status" value="1"/>
</dbReference>
<dbReference type="Pfam" id="PF01632">
    <property type="entry name" value="Ribosomal_L35p"/>
    <property type="match status" value="1"/>
</dbReference>
<dbReference type="PRINTS" id="PR00064">
    <property type="entry name" value="RIBOSOMALL35"/>
</dbReference>
<dbReference type="SUPFAM" id="SSF143034">
    <property type="entry name" value="L35p-like"/>
    <property type="match status" value="1"/>
</dbReference>
<geneLocation type="chloroplast"/>
<gene>
    <name evidence="1" type="primary">rpl35</name>
    <name type="ordered locus">Grc000119</name>
</gene>
<evidence type="ECO:0000255" key="1">
    <source>
        <dbReference type="HAMAP-Rule" id="MF_00514"/>
    </source>
</evidence>
<evidence type="ECO:0000305" key="2"/>
<proteinExistence type="inferred from homology"/>
<name>RK35_GRATL</name>
<keyword id="KW-0150">Chloroplast</keyword>
<keyword id="KW-0934">Plastid</keyword>
<keyword id="KW-0687">Ribonucleoprotein</keyword>
<keyword id="KW-0689">Ribosomal protein</keyword>
<protein>
    <recommendedName>
        <fullName evidence="1">Large ribosomal subunit protein bL35c</fullName>
    </recommendedName>
    <alternativeName>
        <fullName evidence="2">50S ribosomal protein L35, chloroplastic</fullName>
    </alternativeName>
</protein>
<feature type="chain" id="PRO_0000177466" description="Large ribosomal subunit protein bL35c">
    <location>
        <begin position="1"/>
        <end position="66"/>
    </location>
</feature>
<comment type="subcellular location">
    <subcellularLocation>
        <location>Plastid</location>
        <location>Chloroplast</location>
    </subcellularLocation>
</comment>
<comment type="similarity">
    <text evidence="1">Belongs to the bacterial ribosomal protein bL35 family.</text>
</comment>
<sequence length="66" mass="8019">MCKLRTSKSIIKRFKFKSKNKILRRMAGRSHLLQKKSSKRKQKLRKIVNLKKIDISSWKFRVPYID</sequence>
<reference key="1">
    <citation type="journal article" date="2004" name="J. Mol. Evol.">
        <title>Comparative analysis of the complete plastid genome sequence of the red alga Gracilaria tenuistipitata var. liui provides insights into the evolution of rhodoplasts and their relationship to other plastids.</title>
        <authorList>
            <person name="Hagopian J.C."/>
            <person name="Reis M."/>
            <person name="Kitajima J.P."/>
            <person name="Bhattacharya D."/>
            <person name="de Oliveira M.C."/>
        </authorList>
    </citation>
    <scope>NUCLEOTIDE SEQUENCE [LARGE SCALE GENOMIC DNA]</scope>
</reference>